<comment type="function">
    <text evidence="1">Essential for oogenesis; required for late follicle cell development.</text>
</comment>
<comment type="subunit">
    <text evidence="1">Component of the small ribosomal subunit. Mature ribosomes consist of a small (40S) and a large (60S) subunit. The 40S subunit contains about 33 different proteins and 1 molecule of RNA (18S). The 60S subunit contains about 49 different proteins and 3 molecules of RNA (28S, 5.8S and 5S).</text>
</comment>
<comment type="subcellular location">
    <subcellularLocation>
        <location evidence="1">Cytoplasm</location>
    </subcellularLocation>
</comment>
<comment type="similarity">
    <text evidence="1">Belongs to the eukaryotic ribosomal protein eS1 family.</text>
</comment>
<organism>
    <name type="scientific">Drosophila sechellia</name>
    <name type="common">Fruit fly</name>
    <dbReference type="NCBI Taxonomy" id="7238"/>
    <lineage>
        <taxon>Eukaryota</taxon>
        <taxon>Metazoa</taxon>
        <taxon>Ecdysozoa</taxon>
        <taxon>Arthropoda</taxon>
        <taxon>Hexapoda</taxon>
        <taxon>Insecta</taxon>
        <taxon>Pterygota</taxon>
        <taxon>Neoptera</taxon>
        <taxon>Endopterygota</taxon>
        <taxon>Diptera</taxon>
        <taxon>Brachycera</taxon>
        <taxon>Muscomorpha</taxon>
        <taxon>Ephydroidea</taxon>
        <taxon>Drosophilidae</taxon>
        <taxon>Drosophila</taxon>
        <taxon>Sophophora</taxon>
    </lineage>
</organism>
<protein>
    <recommendedName>
        <fullName evidence="1">Small ribosomal subunit protein eS1</fullName>
    </recommendedName>
    <alternativeName>
        <fullName evidence="3">40S ribosomal protein S3a</fullName>
    </alternativeName>
</protein>
<feature type="initiator methionine" description="Removed" evidence="1">
    <location>
        <position position="1"/>
    </location>
</feature>
<feature type="chain" id="PRO_0000389312" description="Small ribosomal subunit protein eS1">
    <location>
        <begin position="2"/>
        <end position="268"/>
    </location>
</feature>
<feature type="region of interest" description="Disordered" evidence="2">
    <location>
        <begin position="1"/>
        <end position="21"/>
    </location>
</feature>
<sequence length="268" mass="30354">MAVGKNKGLSKGGKKGGKKKVVDPFSRKDWYDVKAPNMFQTRQIGKTLVNRTQGQRIASDYLKGRVFEVSLADLQKDIDPERSFRKFRLIAEDVQDRNVLCNFHGMDLTTDKYRSMVKKWQTLIEAIVEAKTIDGYLLRVFCIGFTAKDQQSQRKTCYAQQSQVRKIRARMTDIITNEVSGADLKQLVNKLALDSIAKDIEKSCQRIYPLHDVYIRKVKVLKKPRFDVSKLLELHGDGGGKSVEAVVSSEGAVIDRPEGYEPPVQEAV</sequence>
<name>RS3A_DROSE</name>
<keyword id="KW-0963">Cytoplasm</keyword>
<keyword id="KW-0217">Developmental protein</keyword>
<keyword id="KW-0221">Differentiation</keyword>
<keyword id="KW-0896">Oogenesis</keyword>
<keyword id="KW-1185">Reference proteome</keyword>
<keyword id="KW-0687">Ribonucleoprotein</keyword>
<keyword id="KW-0689">Ribosomal protein</keyword>
<gene>
    <name evidence="1" type="primary">RpS3A</name>
    <name type="ORF">GM23236</name>
</gene>
<reference key="1">
    <citation type="journal article" date="2007" name="Nature">
        <title>Evolution of genes and genomes on the Drosophila phylogeny.</title>
        <authorList>
            <consortium name="Drosophila 12 genomes consortium"/>
        </authorList>
    </citation>
    <scope>NUCLEOTIDE SEQUENCE [LARGE SCALE GENOMIC DNA]</scope>
    <source>
        <strain>Rob3c / Tucson 14021-0248.25</strain>
    </source>
</reference>
<proteinExistence type="inferred from homology"/>
<evidence type="ECO:0000255" key="1">
    <source>
        <dbReference type="HAMAP-Rule" id="MF_03122"/>
    </source>
</evidence>
<evidence type="ECO:0000256" key="2">
    <source>
        <dbReference type="SAM" id="MobiDB-lite"/>
    </source>
</evidence>
<evidence type="ECO:0000305" key="3"/>
<dbReference type="EMBL" id="CH480867">
    <property type="protein sequence ID" value="EDW53707.1"/>
    <property type="molecule type" value="Genomic_DNA"/>
</dbReference>
<dbReference type="RefSeq" id="XP_002044486.1">
    <property type="nucleotide sequence ID" value="XM_002044450.1"/>
</dbReference>
<dbReference type="SMR" id="B4IL76"/>
<dbReference type="STRING" id="7238.B4IL76"/>
<dbReference type="EnsemblMetazoa" id="FBtr0206221">
    <property type="protein sequence ID" value="FBpp0204713"/>
    <property type="gene ID" value="FBgn0178103"/>
</dbReference>
<dbReference type="EnsemblMetazoa" id="XM_002044451.2">
    <property type="protein sequence ID" value="XP_002044487.2"/>
    <property type="gene ID" value="LOC6620278"/>
</dbReference>
<dbReference type="HOGENOM" id="CLU_062507_0_1_1"/>
<dbReference type="OMA" id="TRFKGHE"/>
<dbReference type="PhylomeDB" id="B4IL76"/>
<dbReference type="ChiTaRS" id="RpS3A">
    <property type="organism name" value="fly"/>
</dbReference>
<dbReference type="Proteomes" id="UP000001292">
    <property type="component" value="Unassembled WGS sequence"/>
</dbReference>
<dbReference type="GO" id="GO:0022627">
    <property type="term" value="C:cytosolic small ribosomal subunit"/>
    <property type="evidence" value="ECO:0007669"/>
    <property type="project" value="UniProtKB-UniRule"/>
</dbReference>
<dbReference type="GO" id="GO:0003735">
    <property type="term" value="F:structural constituent of ribosome"/>
    <property type="evidence" value="ECO:0007669"/>
    <property type="project" value="UniProtKB-UniRule"/>
</dbReference>
<dbReference type="GO" id="GO:0048477">
    <property type="term" value="P:oogenesis"/>
    <property type="evidence" value="ECO:0007669"/>
    <property type="project" value="UniProtKB-KW"/>
</dbReference>
<dbReference type="GO" id="GO:0006412">
    <property type="term" value="P:translation"/>
    <property type="evidence" value="ECO:0007669"/>
    <property type="project" value="UniProtKB-UniRule"/>
</dbReference>
<dbReference type="HAMAP" id="MF_03122">
    <property type="entry name" value="Ribosomal_eS1_euk"/>
    <property type="match status" value="1"/>
</dbReference>
<dbReference type="InterPro" id="IPR001593">
    <property type="entry name" value="Ribosomal_eS1"/>
</dbReference>
<dbReference type="InterPro" id="IPR018281">
    <property type="entry name" value="Ribosomal_eS1_CS"/>
</dbReference>
<dbReference type="InterPro" id="IPR027500">
    <property type="entry name" value="Ribosomal_eS1_euk"/>
</dbReference>
<dbReference type="PANTHER" id="PTHR11830">
    <property type="entry name" value="40S RIBOSOMAL PROTEIN S3A"/>
    <property type="match status" value="1"/>
</dbReference>
<dbReference type="Pfam" id="PF01015">
    <property type="entry name" value="Ribosomal_S3Ae"/>
    <property type="match status" value="1"/>
</dbReference>
<dbReference type="SMART" id="SM01397">
    <property type="entry name" value="Ribosomal_S3Ae"/>
    <property type="match status" value="1"/>
</dbReference>
<dbReference type="PROSITE" id="PS01191">
    <property type="entry name" value="RIBOSOMAL_S3AE"/>
    <property type="match status" value="1"/>
</dbReference>
<accession>B4IL76</accession>